<reference key="1">
    <citation type="journal article" date="2008" name="PLoS ONE">
        <title>Comparative analysis of Acinetobacters: three genomes for three lifestyles.</title>
        <authorList>
            <person name="Vallenet D."/>
            <person name="Nordmann P."/>
            <person name="Barbe V."/>
            <person name="Poirel L."/>
            <person name="Mangenot S."/>
            <person name="Bataille E."/>
            <person name="Dossat C."/>
            <person name="Gas S."/>
            <person name="Kreimeyer A."/>
            <person name="Lenoble P."/>
            <person name="Oztas S."/>
            <person name="Poulain J."/>
            <person name="Segurens B."/>
            <person name="Robert C."/>
            <person name="Abergel C."/>
            <person name="Claverie J.-M."/>
            <person name="Raoult D."/>
            <person name="Medigue C."/>
            <person name="Weissenbach J."/>
            <person name="Cruveiller S."/>
        </authorList>
    </citation>
    <scope>NUCLEOTIDE SEQUENCE [LARGE SCALE GENOMIC DNA]</scope>
    <source>
        <strain>AYE</strain>
    </source>
</reference>
<gene>
    <name evidence="2" type="primary">arcB</name>
    <name type="ordered locus">ABAYE1571</name>
</gene>
<comment type="function">
    <text evidence="1">Reversibly catalyzes the transfer of the carbamoyl group from carbamoyl phosphate (CP) to the N(epsilon) atom of ornithine (ORN) to produce L-citrulline.</text>
</comment>
<comment type="catalytic activity">
    <reaction evidence="2">
        <text>carbamoyl phosphate + L-ornithine = L-citrulline + phosphate + H(+)</text>
        <dbReference type="Rhea" id="RHEA:19513"/>
        <dbReference type="ChEBI" id="CHEBI:15378"/>
        <dbReference type="ChEBI" id="CHEBI:43474"/>
        <dbReference type="ChEBI" id="CHEBI:46911"/>
        <dbReference type="ChEBI" id="CHEBI:57743"/>
        <dbReference type="ChEBI" id="CHEBI:58228"/>
        <dbReference type="EC" id="2.1.3.3"/>
    </reaction>
</comment>
<comment type="pathway">
    <text evidence="2">Amino-acid degradation; L-arginine degradation via ADI pathway; carbamoyl phosphate from L-arginine: step 2/2.</text>
</comment>
<comment type="subcellular location">
    <subcellularLocation>
        <location evidence="2">Cytoplasm</location>
    </subcellularLocation>
</comment>
<comment type="similarity">
    <text evidence="2">Belongs to the aspartate/ornithine carbamoyltransferase superfamily. OTCase family.</text>
</comment>
<feature type="chain" id="PRO_1000137084" description="Ornithine carbamoyltransferase">
    <location>
        <begin position="1"/>
        <end position="306"/>
    </location>
</feature>
<feature type="binding site" evidence="2">
    <location>
        <begin position="53"/>
        <end position="56"/>
    </location>
    <ligand>
        <name>carbamoyl phosphate</name>
        <dbReference type="ChEBI" id="CHEBI:58228"/>
    </ligand>
</feature>
<feature type="binding site" evidence="2">
    <location>
        <position position="80"/>
    </location>
    <ligand>
        <name>carbamoyl phosphate</name>
        <dbReference type="ChEBI" id="CHEBI:58228"/>
    </ligand>
</feature>
<feature type="binding site" evidence="2">
    <location>
        <position position="104"/>
    </location>
    <ligand>
        <name>carbamoyl phosphate</name>
        <dbReference type="ChEBI" id="CHEBI:58228"/>
    </ligand>
</feature>
<feature type="binding site" evidence="2">
    <location>
        <begin position="131"/>
        <end position="134"/>
    </location>
    <ligand>
        <name>carbamoyl phosphate</name>
        <dbReference type="ChEBI" id="CHEBI:58228"/>
    </ligand>
</feature>
<feature type="binding site" evidence="2">
    <location>
        <position position="162"/>
    </location>
    <ligand>
        <name>L-ornithine</name>
        <dbReference type="ChEBI" id="CHEBI:46911"/>
    </ligand>
</feature>
<feature type="binding site" evidence="2">
    <location>
        <position position="219"/>
    </location>
    <ligand>
        <name>L-ornithine</name>
        <dbReference type="ChEBI" id="CHEBI:46911"/>
    </ligand>
</feature>
<feature type="binding site" evidence="2">
    <location>
        <begin position="223"/>
        <end position="224"/>
    </location>
    <ligand>
        <name>L-ornithine</name>
        <dbReference type="ChEBI" id="CHEBI:46911"/>
    </ligand>
</feature>
<feature type="binding site" evidence="2">
    <location>
        <begin position="259"/>
        <end position="260"/>
    </location>
    <ligand>
        <name>carbamoyl phosphate</name>
        <dbReference type="ChEBI" id="CHEBI:58228"/>
    </ligand>
</feature>
<feature type="binding site" evidence="2">
    <location>
        <position position="287"/>
    </location>
    <ligand>
        <name>carbamoyl phosphate</name>
        <dbReference type="ChEBI" id="CHEBI:58228"/>
    </ligand>
</feature>
<keyword id="KW-0056">Arginine metabolism</keyword>
<keyword id="KW-0963">Cytoplasm</keyword>
<keyword id="KW-0808">Transferase</keyword>
<sequence length="306" mass="34556">MALRHFLTLRDLSTLELNRILERASELKKMQQSNKVYQPFVGKVLGMIFEKSSTRTRISFEAGINQFGGSAIFLSPRDTQLGRGEPIEDSARVISSMLDIVMIRTFGHDIVERFASYSKVPVINGLTDDHHPCQLLADLQTYIEHRGSIEGKTVAWIGDGNNMCNSYIEAAHMMGFKLKIASPKGYEPKPEFLAEFGHCVELFDNAEDAAVNADLIVTDVWASMGQEEEQKLREKAFANFQVNEKLMGLAHPDCLFMHCLPAHRGEEISETMLDHKNAVVWDEAENRLHAQKALMEFLLNENLKKA</sequence>
<evidence type="ECO:0000250" key="1"/>
<evidence type="ECO:0000255" key="2">
    <source>
        <dbReference type="HAMAP-Rule" id="MF_01109"/>
    </source>
</evidence>
<dbReference type="EC" id="2.1.3.3" evidence="2"/>
<dbReference type="EMBL" id="CU459141">
    <property type="protein sequence ID" value="CAM86469.1"/>
    <property type="molecule type" value="Genomic_DNA"/>
</dbReference>
<dbReference type="SMR" id="B0V6G5"/>
<dbReference type="EnsemblBacteria" id="CAM86469">
    <property type="protein sequence ID" value="CAM86469"/>
    <property type="gene ID" value="ABAYE1571"/>
</dbReference>
<dbReference type="KEGG" id="aby:ABAYE1571"/>
<dbReference type="HOGENOM" id="CLU_043846_3_2_6"/>
<dbReference type="UniPathway" id="UPA00254">
    <property type="reaction ID" value="UER00365"/>
</dbReference>
<dbReference type="GO" id="GO:0005737">
    <property type="term" value="C:cytoplasm"/>
    <property type="evidence" value="ECO:0007669"/>
    <property type="project" value="UniProtKB-SubCell"/>
</dbReference>
<dbReference type="GO" id="GO:0016597">
    <property type="term" value="F:amino acid binding"/>
    <property type="evidence" value="ECO:0007669"/>
    <property type="project" value="InterPro"/>
</dbReference>
<dbReference type="GO" id="GO:0004585">
    <property type="term" value="F:ornithine carbamoyltransferase activity"/>
    <property type="evidence" value="ECO:0007669"/>
    <property type="project" value="UniProtKB-UniRule"/>
</dbReference>
<dbReference type="GO" id="GO:0042450">
    <property type="term" value="P:arginine biosynthetic process via ornithine"/>
    <property type="evidence" value="ECO:0007669"/>
    <property type="project" value="TreeGrafter"/>
</dbReference>
<dbReference type="GO" id="GO:0019547">
    <property type="term" value="P:arginine catabolic process to ornithine"/>
    <property type="evidence" value="ECO:0007669"/>
    <property type="project" value="UniProtKB-UniRule"/>
</dbReference>
<dbReference type="GO" id="GO:0019240">
    <property type="term" value="P:citrulline biosynthetic process"/>
    <property type="evidence" value="ECO:0007669"/>
    <property type="project" value="TreeGrafter"/>
</dbReference>
<dbReference type="FunFam" id="3.40.50.1370:FF:000008">
    <property type="entry name" value="Ornithine carbamoyltransferase"/>
    <property type="match status" value="1"/>
</dbReference>
<dbReference type="Gene3D" id="3.40.50.1370">
    <property type="entry name" value="Aspartate/ornithine carbamoyltransferase"/>
    <property type="match status" value="2"/>
</dbReference>
<dbReference type="HAMAP" id="MF_01109">
    <property type="entry name" value="OTCase"/>
    <property type="match status" value="1"/>
</dbReference>
<dbReference type="InterPro" id="IPR006132">
    <property type="entry name" value="Asp/Orn_carbamoyltranf_P-bd"/>
</dbReference>
<dbReference type="InterPro" id="IPR006130">
    <property type="entry name" value="Asp/Orn_carbamoylTrfase"/>
</dbReference>
<dbReference type="InterPro" id="IPR036901">
    <property type="entry name" value="Asp/Orn_carbamoylTrfase_sf"/>
</dbReference>
<dbReference type="InterPro" id="IPR006131">
    <property type="entry name" value="Asp_carbamoyltransf_Asp/Orn-bd"/>
</dbReference>
<dbReference type="InterPro" id="IPR002292">
    <property type="entry name" value="Orn/put_carbamltrans"/>
</dbReference>
<dbReference type="InterPro" id="IPR024904">
    <property type="entry name" value="OTCase_ArgI"/>
</dbReference>
<dbReference type="NCBIfam" id="TIGR00658">
    <property type="entry name" value="orni_carb_tr"/>
    <property type="match status" value="1"/>
</dbReference>
<dbReference type="NCBIfam" id="NF001986">
    <property type="entry name" value="PRK00779.1"/>
    <property type="match status" value="1"/>
</dbReference>
<dbReference type="PANTHER" id="PTHR45753">
    <property type="entry name" value="ORNITHINE CARBAMOYLTRANSFERASE, MITOCHONDRIAL"/>
    <property type="match status" value="1"/>
</dbReference>
<dbReference type="PANTHER" id="PTHR45753:SF3">
    <property type="entry name" value="ORNITHINE TRANSCARBAMYLASE, MITOCHONDRIAL"/>
    <property type="match status" value="1"/>
</dbReference>
<dbReference type="Pfam" id="PF00185">
    <property type="entry name" value="OTCace"/>
    <property type="match status" value="1"/>
</dbReference>
<dbReference type="Pfam" id="PF02729">
    <property type="entry name" value="OTCace_N"/>
    <property type="match status" value="1"/>
</dbReference>
<dbReference type="PRINTS" id="PR00100">
    <property type="entry name" value="AOTCASE"/>
</dbReference>
<dbReference type="PRINTS" id="PR00102">
    <property type="entry name" value="OTCASE"/>
</dbReference>
<dbReference type="SUPFAM" id="SSF53671">
    <property type="entry name" value="Aspartate/ornithine carbamoyltransferase"/>
    <property type="match status" value="1"/>
</dbReference>
<dbReference type="PROSITE" id="PS00097">
    <property type="entry name" value="CARBAMOYLTRANSFERASE"/>
    <property type="match status" value="1"/>
</dbReference>
<accession>B0V6G5</accession>
<protein>
    <recommendedName>
        <fullName evidence="2">Ornithine carbamoyltransferase</fullName>
        <shortName evidence="2">OTCase</shortName>
        <ecNumber evidence="2">2.1.3.3</ecNumber>
    </recommendedName>
</protein>
<proteinExistence type="inferred from homology"/>
<organism>
    <name type="scientific">Acinetobacter baumannii (strain AYE)</name>
    <dbReference type="NCBI Taxonomy" id="509173"/>
    <lineage>
        <taxon>Bacteria</taxon>
        <taxon>Pseudomonadati</taxon>
        <taxon>Pseudomonadota</taxon>
        <taxon>Gammaproteobacteria</taxon>
        <taxon>Moraxellales</taxon>
        <taxon>Moraxellaceae</taxon>
        <taxon>Acinetobacter</taxon>
        <taxon>Acinetobacter calcoaceticus/baumannii complex</taxon>
    </lineage>
</organism>
<name>OTC_ACIBY</name>